<name>TRPA_RIPO1</name>
<gene>
    <name evidence="1" type="primary">trpA</name>
    <name type="ordered locus">PCC8801_1490</name>
</gene>
<organism>
    <name type="scientific">Rippkaea orientalis (strain PCC 8801 / RF-1)</name>
    <name type="common">Cyanothece sp. (strain PCC 8801)</name>
    <dbReference type="NCBI Taxonomy" id="41431"/>
    <lineage>
        <taxon>Bacteria</taxon>
        <taxon>Bacillati</taxon>
        <taxon>Cyanobacteriota</taxon>
        <taxon>Cyanophyceae</taxon>
        <taxon>Oscillatoriophycideae</taxon>
        <taxon>Chroococcales</taxon>
        <taxon>Aphanothecaceae</taxon>
        <taxon>Rippkaea</taxon>
        <taxon>Rippkaea orientalis</taxon>
    </lineage>
</organism>
<reference key="1">
    <citation type="journal article" date="2011" name="MBio">
        <title>Novel metabolic attributes of the genus Cyanothece, comprising a group of unicellular nitrogen-fixing Cyanobacteria.</title>
        <authorList>
            <person name="Bandyopadhyay A."/>
            <person name="Elvitigala T."/>
            <person name="Welsh E."/>
            <person name="Stockel J."/>
            <person name="Liberton M."/>
            <person name="Min H."/>
            <person name="Sherman L.A."/>
            <person name="Pakrasi H.B."/>
        </authorList>
    </citation>
    <scope>NUCLEOTIDE SEQUENCE [LARGE SCALE GENOMIC DNA]</scope>
    <source>
        <strain>PCC 8801 / RF-1</strain>
    </source>
</reference>
<evidence type="ECO:0000255" key="1">
    <source>
        <dbReference type="HAMAP-Rule" id="MF_00131"/>
    </source>
</evidence>
<accession>B7JUK2</accession>
<feature type="chain" id="PRO_1000117733" description="Tryptophan synthase alpha chain">
    <location>
        <begin position="1"/>
        <end position="267"/>
    </location>
</feature>
<feature type="active site" description="Proton acceptor" evidence="1">
    <location>
        <position position="49"/>
    </location>
</feature>
<feature type="active site" description="Proton acceptor" evidence="1">
    <location>
        <position position="60"/>
    </location>
</feature>
<comment type="function">
    <text evidence="1">The alpha subunit is responsible for the aldol cleavage of indoleglycerol phosphate to indole and glyceraldehyde 3-phosphate.</text>
</comment>
<comment type="catalytic activity">
    <reaction evidence="1">
        <text>(1S,2R)-1-C-(indol-3-yl)glycerol 3-phosphate + L-serine = D-glyceraldehyde 3-phosphate + L-tryptophan + H2O</text>
        <dbReference type="Rhea" id="RHEA:10532"/>
        <dbReference type="ChEBI" id="CHEBI:15377"/>
        <dbReference type="ChEBI" id="CHEBI:33384"/>
        <dbReference type="ChEBI" id="CHEBI:57912"/>
        <dbReference type="ChEBI" id="CHEBI:58866"/>
        <dbReference type="ChEBI" id="CHEBI:59776"/>
        <dbReference type="EC" id="4.2.1.20"/>
    </reaction>
</comment>
<comment type="pathway">
    <text evidence="1">Amino-acid biosynthesis; L-tryptophan biosynthesis; L-tryptophan from chorismate: step 5/5.</text>
</comment>
<comment type="subunit">
    <text evidence="1">Tetramer of two alpha and two beta chains.</text>
</comment>
<comment type="similarity">
    <text evidence="1">Belongs to the TrpA family.</text>
</comment>
<proteinExistence type="inferred from homology"/>
<sequence length="267" mass="28475">MTSVSDCFQSLRDRRQCALIPFITAGDPDLETTAKALRLLDASGADLIELGVPYSDPLADGPVIQAAATRALGRGVKLEDVLGVVKEVSPEIKAPIILFTYYNPIFYRGVEAFLQQVKAAGVQGLVVPDLPLEEAESLLKPAHEVGIAVTLLVAPTSPIERIEAIARQSQGFIYLVSVTGVTGMRSQVTSRVKELLTSLRSATDKPIGVGFGISKPEHALQVKNWGADAVIVGSAMVKRLAEGTPEEGLKAIGAFCQDLKQALKEDQ</sequence>
<keyword id="KW-0028">Amino-acid biosynthesis</keyword>
<keyword id="KW-0057">Aromatic amino acid biosynthesis</keyword>
<keyword id="KW-0456">Lyase</keyword>
<keyword id="KW-1185">Reference proteome</keyword>
<keyword id="KW-0822">Tryptophan biosynthesis</keyword>
<dbReference type="EC" id="4.2.1.20" evidence="1"/>
<dbReference type="EMBL" id="CP001287">
    <property type="protein sequence ID" value="ACK65546.1"/>
    <property type="molecule type" value="Genomic_DNA"/>
</dbReference>
<dbReference type="RefSeq" id="WP_012594819.1">
    <property type="nucleotide sequence ID" value="NC_011726.1"/>
</dbReference>
<dbReference type="SMR" id="B7JUK2"/>
<dbReference type="STRING" id="41431.PCC8801_1490"/>
<dbReference type="KEGG" id="cyp:PCC8801_1490"/>
<dbReference type="eggNOG" id="COG0159">
    <property type="taxonomic scope" value="Bacteria"/>
</dbReference>
<dbReference type="HOGENOM" id="CLU_016734_0_2_3"/>
<dbReference type="OrthoDB" id="9804578at2"/>
<dbReference type="UniPathway" id="UPA00035">
    <property type="reaction ID" value="UER00044"/>
</dbReference>
<dbReference type="Proteomes" id="UP000008204">
    <property type="component" value="Chromosome"/>
</dbReference>
<dbReference type="GO" id="GO:0005829">
    <property type="term" value="C:cytosol"/>
    <property type="evidence" value="ECO:0007669"/>
    <property type="project" value="TreeGrafter"/>
</dbReference>
<dbReference type="GO" id="GO:0004834">
    <property type="term" value="F:tryptophan synthase activity"/>
    <property type="evidence" value="ECO:0007669"/>
    <property type="project" value="UniProtKB-UniRule"/>
</dbReference>
<dbReference type="CDD" id="cd04724">
    <property type="entry name" value="Tryptophan_synthase_alpha"/>
    <property type="match status" value="1"/>
</dbReference>
<dbReference type="FunFam" id="3.20.20.70:FF:000107">
    <property type="entry name" value="Tryptophan synthase alpha chain, chloroplastic"/>
    <property type="match status" value="1"/>
</dbReference>
<dbReference type="Gene3D" id="3.20.20.70">
    <property type="entry name" value="Aldolase class I"/>
    <property type="match status" value="1"/>
</dbReference>
<dbReference type="HAMAP" id="MF_00131">
    <property type="entry name" value="Trp_synth_alpha"/>
    <property type="match status" value="1"/>
</dbReference>
<dbReference type="InterPro" id="IPR013785">
    <property type="entry name" value="Aldolase_TIM"/>
</dbReference>
<dbReference type="InterPro" id="IPR011060">
    <property type="entry name" value="RibuloseP-bd_barrel"/>
</dbReference>
<dbReference type="InterPro" id="IPR018204">
    <property type="entry name" value="Trp_synthase_alpha_AS"/>
</dbReference>
<dbReference type="InterPro" id="IPR002028">
    <property type="entry name" value="Trp_synthase_suA"/>
</dbReference>
<dbReference type="NCBIfam" id="TIGR00262">
    <property type="entry name" value="trpA"/>
    <property type="match status" value="1"/>
</dbReference>
<dbReference type="PANTHER" id="PTHR43406:SF1">
    <property type="entry name" value="TRYPTOPHAN SYNTHASE ALPHA CHAIN, CHLOROPLASTIC"/>
    <property type="match status" value="1"/>
</dbReference>
<dbReference type="PANTHER" id="PTHR43406">
    <property type="entry name" value="TRYPTOPHAN SYNTHASE, ALPHA CHAIN"/>
    <property type="match status" value="1"/>
</dbReference>
<dbReference type="Pfam" id="PF00290">
    <property type="entry name" value="Trp_syntA"/>
    <property type="match status" value="1"/>
</dbReference>
<dbReference type="SUPFAM" id="SSF51366">
    <property type="entry name" value="Ribulose-phoshate binding barrel"/>
    <property type="match status" value="1"/>
</dbReference>
<dbReference type="PROSITE" id="PS00167">
    <property type="entry name" value="TRP_SYNTHASE_ALPHA"/>
    <property type="match status" value="1"/>
</dbReference>
<protein>
    <recommendedName>
        <fullName evidence="1">Tryptophan synthase alpha chain</fullName>
        <ecNumber evidence="1">4.2.1.20</ecNumber>
    </recommendedName>
</protein>